<dbReference type="EC" id="3.6.1.54" evidence="1"/>
<dbReference type="EMBL" id="CP000880">
    <property type="protein sequence ID" value="ABX22279.1"/>
    <property type="molecule type" value="Genomic_DNA"/>
</dbReference>
<dbReference type="SMR" id="A9MLB0"/>
<dbReference type="STRING" id="41514.SARI_02417"/>
<dbReference type="KEGG" id="ses:SARI_02417"/>
<dbReference type="HOGENOM" id="CLU_074586_0_0_6"/>
<dbReference type="UniPathway" id="UPA00359">
    <property type="reaction ID" value="UER00480"/>
</dbReference>
<dbReference type="Proteomes" id="UP000002084">
    <property type="component" value="Chromosome"/>
</dbReference>
<dbReference type="GO" id="GO:0005737">
    <property type="term" value="C:cytoplasm"/>
    <property type="evidence" value="ECO:0007669"/>
    <property type="project" value="InterPro"/>
</dbReference>
<dbReference type="GO" id="GO:0019897">
    <property type="term" value="C:extrinsic component of plasma membrane"/>
    <property type="evidence" value="ECO:0007669"/>
    <property type="project" value="UniProtKB-UniRule"/>
</dbReference>
<dbReference type="GO" id="GO:0030145">
    <property type="term" value="F:manganese ion binding"/>
    <property type="evidence" value="ECO:0007669"/>
    <property type="project" value="UniProtKB-UniRule"/>
</dbReference>
<dbReference type="GO" id="GO:0008758">
    <property type="term" value="F:UDP-2,3-diacylglucosamine hydrolase activity"/>
    <property type="evidence" value="ECO:0007669"/>
    <property type="project" value="UniProtKB-UniRule"/>
</dbReference>
<dbReference type="GO" id="GO:0009245">
    <property type="term" value="P:lipid A biosynthetic process"/>
    <property type="evidence" value="ECO:0007669"/>
    <property type="project" value="UniProtKB-UniRule"/>
</dbReference>
<dbReference type="CDD" id="cd07398">
    <property type="entry name" value="MPP_YbbF-LpxH"/>
    <property type="match status" value="1"/>
</dbReference>
<dbReference type="FunFam" id="3.60.21.10:FF:000012">
    <property type="entry name" value="UDP-2,3-diacylglucosamine hydrolase"/>
    <property type="match status" value="1"/>
</dbReference>
<dbReference type="Gene3D" id="3.60.21.10">
    <property type="match status" value="1"/>
</dbReference>
<dbReference type="HAMAP" id="MF_00575">
    <property type="entry name" value="LpxH"/>
    <property type="match status" value="1"/>
</dbReference>
<dbReference type="InterPro" id="IPR004843">
    <property type="entry name" value="Calcineurin-like_PHP_ApaH"/>
</dbReference>
<dbReference type="InterPro" id="IPR043461">
    <property type="entry name" value="LpxH-like"/>
</dbReference>
<dbReference type="InterPro" id="IPR029052">
    <property type="entry name" value="Metallo-depent_PP-like"/>
</dbReference>
<dbReference type="InterPro" id="IPR010138">
    <property type="entry name" value="UDP-diacylglucosamine_Hdrlase"/>
</dbReference>
<dbReference type="NCBIfam" id="TIGR01854">
    <property type="entry name" value="lipid_A_lpxH"/>
    <property type="match status" value="1"/>
</dbReference>
<dbReference type="NCBIfam" id="NF003743">
    <property type="entry name" value="PRK05340.1"/>
    <property type="match status" value="1"/>
</dbReference>
<dbReference type="PANTHER" id="PTHR34990:SF1">
    <property type="entry name" value="UDP-2,3-DIACYLGLUCOSAMINE HYDROLASE"/>
    <property type="match status" value="1"/>
</dbReference>
<dbReference type="PANTHER" id="PTHR34990">
    <property type="entry name" value="UDP-2,3-DIACYLGLUCOSAMINE HYDROLASE-RELATED"/>
    <property type="match status" value="1"/>
</dbReference>
<dbReference type="Pfam" id="PF00149">
    <property type="entry name" value="Metallophos"/>
    <property type="match status" value="1"/>
</dbReference>
<dbReference type="SUPFAM" id="SSF56300">
    <property type="entry name" value="Metallo-dependent phosphatases"/>
    <property type="match status" value="1"/>
</dbReference>
<accession>A9MLB0</accession>
<name>LPXH_SALAR</name>
<evidence type="ECO:0000255" key="1">
    <source>
        <dbReference type="HAMAP-Rule" id="MF_00575"/>
    </source>
</evidence>
<proteinExistence type="inferred from homology"/>
<comment type="function">
    <text evidence="1">Hydrolyzes the pyrophosphate bond of UDP-2,3-diacylglucosamine to yield 2,3-diacylglucosamine 1-phosphate (lipid X) and UMP by catalyzing the attack of water at the alpha-P atom. Involved in the biosynthesis of lipid A, a phosphorylated glycolipid that anchors the lipopolysaccharide to the outer membrane of the cell.</text>
</comment>
<comment type="catalytic activity">
    <reaction evidence="1">
        <text>UDP-2-N,3-O-bis[(3R)-3-hydroxytetradecanoyl]-alpha-D-glucosamine + H2O = 2-N,3-O-bis[(3R)-3-hydroxytetradecanoyl]-alpha-D-glucosaminyl 1-phosphate + UMP + 2 H(+)</text>
        <dbReference type="Rhea" id="RHEA:25213"/>
        <dbReference type="ChEBI" id="CHEBI:15377"/>
        <dbReference type="ChEBI" id="CHEBI:15378"/>
        <dbReference type="ChEBI" id="CHEBI:57865"/>
        <dbReference type="ChEBI" id="CHEBI:57957"/>
        <dbReference type="ChEBI" id="CHEBI:78847"/>
        <dbReference type="EC" id="3.6.1.54"/>
    </reaction>
</comment>
<comment type="cofactor">
    <cofactor evidence="1">
        <name>Mn(2+)</name>
        <dbReference type="ChEBI" id="CHEBI:29035"/>
    </cofactor>
    <text evidence="1">Binds 2 Mn(2+) ions per subunit in a binuclear metal center.</text>
</comment>
<comment type="pathway">
    <text evidence="1">Glycolipid biosynthesis; lipid IV(A) biosynthesis; lipid IV(A) from (3R)-3-hydroxytetradecanoyl-[acyl-carrier-protein] and UDP-N-acetyl-alpha-D-glucosamine: step 4/6.</text>
</comment>
<comment type="subcellular location">
    <subcellularLocation>
        <location evidence="1">Cell inner membrane</location>
        <topology evidence="1">Peripheral membrane protein</topology>
        <orientation evidence="1">Cytoplasmic side</orientation>
    </subcellularLocation>
</comment>
<comment type="similarity">
    <text evidence="1">Belongs to the LpxH family.</text>
</comment>
<gene>
    <name evidence="1" type="primary">lpxH</name>
    <name type="ordered locus">SARI_02417</name>
</gene>
<protein>
    <recommendedName>
        <fullName evidence="1">UDP-2,3-diacylglucosamine hydrolase</fullName>
        <ecNumber evidence="1">3.6.1.54</ecNumber>
    </recommendedName>
    <alternativeName>
        <fullName evidence="1">UDP-2,3-diacylglucosamine diphosphatase</fullName>
    </alternativeName>
</protein>
<organism>
    <name type="scientific">Salmonella arizonae (strain ATCC BAA-731 / CDC346-86 / RSK2980)</name>
    <dbReference type="NCBI Taxonomy" id="41514"/>
    <lineage>
        <taxon>Bacteria</taxon>
        <taxon>Pseudomonadati</taxon>
        <taxon>Pseudomonadota</taxon>
        <taxon>Gammaproteobacteria</taxon>
        <taxon>Enterobacterales</taxon>
        <taxon>Enterobacteriaceae</taxon>
        <taxon>Salmonella</taxon>
    </lineage>
</organism>
<keyword id="KW-0997">Cell inner membrane</keyword>
<keyword id="KW-1003">Cell membrane</keyword>
<keyword id="KW-0378">Hydrolase</keyword>
<keyword id="KW-0441">Lipid A biosynthesis</keyword>
<keyword id="KW-0444">Lipid biosynthesis</keyword>
<keyword id="KW-0443">Lipid metabolism</keyword>
<keyword id="KW-0464">Manganese</keyword>
<keyword id="KW-0472">Membrane</keyword>
<keyword id="KW-0479">Metal-binding</keyword>
<keyword id="KW-1185">Reference proteome</keyword>
<reference key="1">
    <citation type="submission" date="2007-11" db="EMBL/GenBank/DDBJ databases">
        <authorList>
            <consortium name="The Salmonella enterica serovar Arizonae Genome Sequencing Project"/>
            <person name="McClelland M."/>
            <person name="Sanderson E.K."/>
            <person name="Porwollik S."/>
            <person name="Spieth J."/>
            <person name="Clifton W.S."/>
            <person name="Fulton R."/>
            <person name="Chunyan W."/>
            <person name="Wollam A."/>
            <person name="Shah N."/>
            <person name="Pepin K."/>
            <person name="Bhonagiri V."/>
            <person name="Nash W."/>
            <person name="Johnson M."/>
            <person name="Thiruvilangam P."/>
            <person name="Wilson R."/>
        </authorList>
    </citation>
    <scope>NUCLEOTIDE SEQUENCE [LARGE SCALE GENOMIC DNA]</scope>
    <source>
        <strain>ATCC BAA-731 / CDC346-86 / RSK2980</strain>
    </source>
</reference>
<sequence length="240" mass="26890">MATLFIADLHLQTEEPAIVAGFLRFLAVEARQADALYILGDLFEAWIGDDDPNPLHREMAVAIKSLVDSGVPCFFIHGNRDFLIGKRFARESGMTLLPQEKVLDLYGRNVLIMHGDTLCTDDAGYQAFRAKVHNPWVQRLFLTLPLFIRRRIAARLRAGSKAANSSKSLDIMDVNAQTVVAEMEKHRVQWLIHGHTHRPAVHELSANGQPAFRVVLGAWHHEGSMVKVTPDNVELIAFPL</sequence>
<feature type="chain" id="PRO_1000082339" description="UDP-2,3-diacylglucosamine hydrolase">
    <location>
        <begin position="1"/>
        <end position="240"/>
    </location>
</feature>
<feature type="binding site" evidence="1">
    <location>
        <position position="8"/>
    </location>
    <ligand>
        <name>Mn(2+)</name>
        <dbReference type="ChEBI" id="CHEBI:29035"/>
        <label>1</label>
    </ligand>
</feature>
<feature type="binding site" evidence="1">
    <location>
        <position position="10"/>
    </location>
    <ligand>
        <name>Mn(2+)</name>
        <dbReference type="ChEBI" id="CHEBI:29035"/>
        <label>1</label>
    </ligand>
</feature>
<feature type="binding site" evidence="1">
    <location>
        <position position="41"/>
    </location>
    <ligand>
        <name>Mn(2+)</name>
        <dbReference type="ChEBI" id="CHEBI:29035"/>
        <label>1</label>
    </ligand>
</feature>
<feature type="binding site" evidence="1">
    <location>
        <position position="41"/>
    </location>
    <ligand>
        <name>Mn(2+)</name>
        <dbReference type="ChEBI" id="CHEBI:29035"/>
        <label>2</label>
    </ligand>
</feature>
<feature type="binding site" evidence="1">
    <location>
        <begin position="79"/>
        <end position="80"/>
    </location>
    <ligand>
        <name>substrate</name>
    </ligand>
</feature>
<feature type="binding site" evidence="1">
    <location>
        <position position="79"/>
    </location>
    <ligand>
        <name>Mn(2+)</name>
        <dbReference type="ChEBI" id="CHEBI:29035"/>
        <label>2</label>
    </ligand>
</feature>
<feature type="binding site" evidence="1">
    <location>
        <position position="114"/>
    </location>
    <ligand>
        <name>Mn(2+)</name>
        <dbReference type="ChEBI" id="CHEBI:29035"/>
        <label>2</label>
    </ligand>
</feature>
<feature type="binding site" evidence="1">
    <location>
        <position position="122"/>
    </location>
    <ligand>
        <name>substrate</name>
    </ligand>
</feature>
<feature type="binding site" evidence="1">
    <location>
        <position position="160"/>
    </location>
    <ligand>
        <name>substrate</name>
    </ligand>
</feature>
<feature type="binding site" evidence="1">
    <location>
        <position position="164"/>
    </location>
    <ligand>
        <name>substrate</name>
    </ligand>
</feature>
<feature type="binding site" evidence="1">
    <location>
        <position position="167"/>
    </location>
    <ligand>
        <name>substrate</name>
    </ligand>
</feature>
<feature type="binding site" evidence="1">
    <location>
        <position position="195"/>
    </location>
    <ligand>
        <name>Mn(2+)</name>
        <dbReference type="ChEBI" id="CHEBI:29035"/>
        <label>2</label>
    </ligand>
</feature>
<feature type="binding site" evidence="1">
    <location>
        <position position="195"/>
    </location>
    <ligand>
        <name>substrate</name>
    </ligand>
</feature>
<feature type="binding site" evidence="1">
    <location>
        <position position="197"/>
    </location>
    <ligand>
        <name>Mn(2+)</name>
        <dbReference type="ChEBI" id="CHEBI:29035"/>
        <label>1</label>
    </ligand>
</feature>